<organism>
    <name type="scientific">Acidothermus cellulolyticus (strain ATCC 43068 / DSM 8971 / 11B)</name>
    <dbReference type="NCBI Taxonomy" id="351607"/>
    <lineage>
        <taxon>Bacteria</taxon>
        <taxon>Bacillati</taxon>
        <taxon>Actinomycetota</taxon>
        <taxon>Actinomycetes</taxon>
        <taxon>Acidothermales</taxon>
        <taxon>Acidothermaceae</taxon>
        <taxon>Acidothermus</taxon>
    </lineage>
</organism>
<protein>
    <recommendedName>
        <fullName>Endoglucanase E1</fullName>
        <ecNumber>3.2.1.4</ecNumber>
    </recommendedName>
    <alternativeName>
        <fullName>Cellulase E1</fullName>
    </alternativeName>
    <alternativeName>
        <fullName>Endo-1,4-beta-glucanase E1</fullName>
    </alternativeName>
    <alternativeName>
        <fullName>Endocellulase E1</fullName>
    </alternativeName>
</protein>
<comment type="function">
    <text>Has a very high specific activity on carboxymethylcellulose.</text>
</comment>
<comment type="catalytic activity">
    <reaction>
        <text>Endohydrolysis of (1-&gt;4)-beta-D-glucosidic linkages in cellulose, lichenin and cereal beta-D-glucans.</text>
        <dbReference type="EC" id="3.2.1.4"/>
    </reaction>
</comment>
<comment type="biophysicochemical properties">
    <temperatureDependence>
        <text>Optimum temperature is 81 degrees Celsius. Thermostable.</text>
    </temperatureDependence>
</comment>
<comment type="similarity">
    <text evidence="3">Belongs to the glycosyl hydrolase 5 (cellulase A) family.</text>
</comment>
<evidence type="ECO:0000255" key="1">
    <source>
        <dbReference type="PROSITE-ProRule" id="PRU01135"/>
    </source>
</evidence>
<evidence type="ECO:0000256" key="2">
    <source>
        <dbReference type="SAM" id="MobiDB-lite"/>
    </source>
</evidence>
<evidence type="ECO:0000305" key="3"/>
<evidence type="ECO:0007829" key="4">
    <source>
        <dbReference type="PDB" id="1ECE"/>
    </source>
</evidence>
<proteinExistence type="evidence at protein level"/>
<sequence>MPRALRRVPGSRVMLRVGVVVAVLALVAALANLAVPRPARAAGGGYWHTSGREILDANNVPVRIAGINWFGFETCNYVVHGLWSRDYRSMLDQIKSLGYNTIRLPYSDDILKPGTMPNSINFYQMNQDLQGLTSLQVMDKIVAYAGQIGLRIILDRHRPDCSGQSALWYTSSVSEATWISDLQALAQRYKGNPTVVGFDLHNEPHDPACWGCGDPSIDWRLAAERAGNAVLSVNPNLLIFVEGVQSYNGDSYWWGGNLQGAGQYPVVLNVPNRLVYSAHDYATSVYPQTWFSDPTFPNNMPGIWNKNWGYLFNQNIAPVWLGEFGTTLQSTTDQTWLKTLVQYLRPTAQYGADSFQWTFWSWNPDSGDTGGILKDDWQTVDTVKDGYLAPIKSSIFDPVGASASPSSQPSPSVSPSPSPSPSASRTPTPTPTPTASPTPTLTPTATPTPTASPTPSPTAASGARCTASYQVNSDWGNGFTVTVAVTNSGSVATKTWTVSWTFGGNQTITNSWNAAVTQNGQSVTARNMSYNNVIQPGQNTTFGFQASYTGSNAAPTVACAAS</sequence>
<name>GUN1_ACIC1</name>
<reference key="1">
    <citation type="submission" date="1995-08" db="EMBL/GenBank/DDBJ databases">
        <authorList>
            <person name="Laymon R.A."/>
            <person name="Himmel M.E."/>
            <person name="Thomas S.R."/>
        </authorList>
    </citation>
    <scope>NUCLEOTIDE SEQUENCE [GENOMIC DNA]</scope>
</reference>
<reference key="2">
    <citation type="journal article" date="2009" name="Genome Res.">
        <title>Complete genome of the cellulolytic thermophile Acidothermus cellulolyticus 11B provides insights into its ecophysiological and evolutionary adaptations.</title>
        <authorList>
            <person name="Barabote R.D."/>
            <person name="Xie G."/>
            <person name="Leu D.H."/>
            <person name="Normand P."/>
            <person name="Necsulea A."/>
            <person name="Daubin V."/>
            <person name="Medigue C."/>
            <person name="Adney W.S."/>
            <person name="Xu X.C."/>
            <person name="Lapidus A."/>
            <person name="Parales R.E."/>
            <person name="Detter C."/>
            <person name="Pujic P."/>
            <person name="Bruce D."/>
            <person name="Lavire C."/>
            <person name="Challacombe J.F."/>
            <person name="Brettin T.S."/>
            <person name="Berry A.M."/>
        </authorList>
    </citation>
    <scope>NUCLEOTIDE SEQUENCE [LARGE SCALE GENOMIC DNA]</scope>
    <source>
        <strain>ATCC 43068 / DSM 8971 / 11B</strain>
    </source>
</reference>
<reference key="3">
    <citation type="journal article" date="1996" name="Biochemistry">
        <title>Crystal structure of thermostable family 5 endocellulase E1 from Acidothermus cellulolyticus in complex with cellotetraose.</title>
        <authorList>
            <person name="Sakon J."/>
            <person name="Adney W.S."/>
            <person name="Himmel M.E."/>
            <person name="Thomas S.R."/>
            <person name="Kaplus P.A."/>
        </authorList>
    </citation>
    <scope>X-RAY CRYSTALLOGRAPHY (2.4 ANGSTROMS) OF 42-398</scope>
</reference>
<accession>P54583</accession>
<accession>A0LSH7</accession>
<keyword id="KW-0002">3D-structure</keyword>
<keyword id="KW-0119">Carbohydrate metabolism</keyword>
<keyword id="KW-0136">Cellulose degradation</keyword>
<keyword id="KW-1015">Disulfide bond</keyword>
<keyword id="KW-0326">Glycosidase</keyword>
<keyword id="KW-0378">Hydrolase</keyword>
<keyword id="KW-0624">Polysaccharide degradation</keyword>
<keyword id="KW-1185">Reference proteome</keyword>
<keyword id="KW-0732">Signal</keyword>
<feature type="signal peptide">
    <location>
        <begin position="1"/>
        <end position="41"/>
    </location>
</feature>
<feature type="chain" id="PRO_0000007834" description="Endoglucanase E1">
    <location>
        <begin position="42"/>
        <end position="562"/>
    </location>
</feature>
<feature type="domain" description="CBM2" evidence="1">
    <location>
        <begin position="458"/>
        <end position="562"/>
    </location>
</feature>
<feature type="region of interest" description="Catalytic">
    <location>
        <begin position="42"/>
        <end position="400"/>
    </location>
</feature>
<feature type="region of interest" description="Disordered" evidence="2">
    <location>
        <begin position="399"/>
        <end position="462"/>
    </location>
</feature>
<feature type="compositionally biased region" description="Low complexity" evidence="2">
    <location>
        <begin position="401"/>
        <end position="411"/>
    </location>
</feature>
<feature type="compositionally biased region" description="Low complexity" evidence="2">
    <location>
        <begin position="437"/>
        <end position="449"/>
    </location>
</feature>
<feature type="active site" description="Proton donor">
    <location>
        <position position="203"/>
    </location>
</feature>
<feature type="active site" description="Nucleophile">
    <location>
        <position position="323"/>
    </location>
</feature>
<feature type="disulfide bond">
    <location>
        <begin position="75"/>
        <end position="161"/>
    </location>
</feature>
<feature type="disulfide bond">
    <location>
        <begin position="209"/>
        <end position="212"/>
    </location>
</feature>
<feature type="strand" evidence="4">
    <location>
        <begin position="48"/>
        <end position="50"/>
    </location>
</feature>
<feature type="strand" evidence="4">
    <location>
        <begin position="53"/>
        <end position="55"/>
    </location>
</feature>
<feature type="strand" evidence="4">
    <location>
        <begin position="65"/>
        <end position="68"/>
    </location>
</feature>
<feature type="turn" evidence="4">
    <location>
        <begin position="80"/>
        <end position="84"/>
    </location>
</feature>
<feature type="helix" evidence="4">
    <location>
        <begin position="87"/>
        <end position="96"/>
    </location>
</feature>
<feature type="strand" evidence="4">
    <location>
        <begin position="101"/>
        <end position="107"/>
    </location>
</feature>
<feature type="helix" evidence="4">
    <location>
        <begin position="108"/>
        <end position="111"/>
    </location>
</feature>
<feature type="strand" evidence="4">
    <location>
        <begin position="123"/>
        <end position="125"/>
    </location>
</feature>
<feature type="turn" evidence="4">
    <location>
        <begin position="127"/>
        <end position="131"/>
    </location>
</feature>
<feature type="helix" evidence="4">
    <location>
        <begin position="134"/>
        <end position="147"/>
    </location>
</feature>
<feature type="strand" evidence="4">
    <location>
        <begin position="151"/>
        <end position="160"/>
    </location>
</feature>
<feature type="strand" evidence="4">
    <location>
        <begin position="166"/>
        <end position="168"/>
    </location>
</feature>
<feature type="strand" evidence="4">
    <location>
        <begin position="171"/>
        <end position="173"/>
    </location>
</feature>
<feature type="helix" evidence="4">
    <location>
        <begin position="175"/>
        <end position="188"/>
    </location>
</feature>
<feature type="turn" evidence="4">
    <location>
        <begin position="189"/>
        <end position="191"/>
    </location>
</feature>
<feature type="strand" evidence="4">
    <location>
        <begin position="195"/>
        <end position="199"/>
    </location>
</feature>
<feature type="strand" evidence="4">
    <location>
        <begin position="209"/>
        <end position="211"/>
    </location>
</feature>
<feature type="turn" evidence="4">
    <location>
        <begin position="215"/>
        <end position="217"/>
    </location>
</feature>
<feature type="helix" evidence="4">
    <location>
        <begin position="219"/>
        <end position="233"/>
    </location>
</feature>
<feature type="strand" evidence="4">
    <location>
        <begin position="237"/>
        <end position="242"/>
    </location>
</feature>
<feature type="strand" evidence="4">
    <location>
        <begin position="244"/>
        <end position="247"/>
    </location>
</feature>
<feature type="turn" evidence="4">
    <location>
        <begin position="254"/>
        <end position="256"/>
    </location>
</feature>
<feature type="turn" evidence="4">
    <location>
        <begin position="259"/>
        <end position="263"/>
    </location>
</feature>
<feature type="strand" evidence="4">
    <location>
        <begin position="269"/>
        <end position="272"/>
    </location>
</feature>
<feature type="strand" evidence="4">
    <location>
        <begin position="274"/>
        <end position="279"/>
    </location>
</feature>
<feature type="turn" evidence="4">
    <location>
        <begin position="283"/>
        <end position="285"/>
    </location>
</feature>
<feature type="helix" evidence="4">
    <location>
        <begin position="289"/>
        <end position="291"/>
    </location>
</feature>
<feature type="turn" evidence="4">
    <location>
        <begin position="294"/>
        <end position="299"/>
    </location>
</feature>
<feature type="helix" evidence="4">
    <location>
        <begin position="300"/>
        <end position="307"/>
    </location>
</feature>
<feature type="helix" evidence="4">
    <location>
        <begin position="309"/>
        <end position="313"/>
    </location>
</feature>
<feature type="strand" evidence="4">
    <location>
        <begin position="319"/>
        <end position="323"/>
    </location>
</feature>
<feature type="helix" evidence="4">
    <location>
        <begin position="331"/>
        <end position="343"/>
    </location>
</feature>
<feature type="helix" evidence="4">
    <location>
        <begin position="347"/>
        <end position="350"/>
    </location>
</feature>
<feature type="strand" evidence="4">
    <location>
        <begin position="356"/>
        <end position="360"/>
    </location>
</feature>
<feature type="turn" evidence="4">
    <location>
        <begin position="367"/>
        <end position="369"/>
    </location>
</feature>
<feature type="strand" evidence="4">
    <location>
        <begin position="377"/>
        <end position="380"/>
    </location>
</feature>
<feature type="helix" evidence="4">
    <location>
        <begin position="382"/>
        <end position="388"/>
    </location>
</feature>
<feature type="helix" evidence="4">
    <location>
        <begin position="389"/>
        <end position="391"/>
    </location>
</feature>
<dbReference type="EC" id="3.2.1.4"/>
<dbReference type="EMBL" id="U33212">
    <property type="protein sequence ID" value="AAA75477.1"/>
    <property type="molecule type" value="Genomic_DNA"/>
</dbReference>
<dbReference type="EMBL" id="CP000481">
    <property type="protein sequence ID" value="ABK52387.1"/>
    <property type="molecule type" value="Genomic_DNA"/>
</dbReference>
<dbReference type="RefSeq" id="WP_011719450.1">
    <property type="nucleotide sequence ID" value="NC_008578.1"/>
</dbReference>
<dbReference type="PDB" id="1ECE">
    <property type="method" value="X-ray"/>
    <property type="resolution" value="2.40 A"/>
    <property type="chains" value="A/B=42-399"/>
</dbReference>
<dbReference type="PDB" id="1VRX">
    <property type="method" value="X-ray"/>
    <property type="resolution" value="2.40 A"/>
    <property type="chains" value="A/B=42-399"/>
</dbReference>
<dbReference type="PDBsum" id="1ECE"/>
<dbReference type="PDBsum" id="1VRX"/>
<dbReference type="SMR" id="P54583"/>
<dbReference type="STRING" id="351607.Acel_0614"/>
<dbReference type="DrugBank" id="DB02379">
    <property type="generic name" value="Beta-D-Glucose"/>
</dbReference>
<dbReference type="CAZy" id="CBM2">
    <property type="family name" value="Carbohydrate-Binding Module Family 2"/>
</dbReference>
<dbReference type="CAZy" id="GH5">
    <property type="family name" value="Glycoside Hydrolase Family 5"/>
</dbReference>
<dbReference type="KEGG" id="ace:Acel_0614"/>
<dbReference type="eggNOG" id="COG2730">
    <property type="taxonomic scope" value="Bacteria"/>
</dbReference>
<dbReference type="HOGENOM" id="CLU_020735_1_0_11"/>
<dbReference type="InParanoid" id="P54583"/>
<dbReference type="OrthoDB" id="4902692at2"/>
<dbReference type="EvolutionaryTrace" id="P54583"/>
<dbReference type="Proteomes" id="UP000008221">
    <property type="component" value="Chromosome"/>
</dbReference>
<dbReference type="GO" id="GO:0008810">
    <property type="term" value="F:cellulase activity"/>
    <property type="evidence" value="ECO:0007669"/>
    <property type="project" value="UniProtKB-EC"/>
</dbReference>
<dbReference type="GO" id="GO:0030247">
    <property type="term" value="F:polysaccharide binding"/>
    <property type="evidence" value="ECO:0007669"/>
    <property type="project" value="InterPro"/>
</dbReference>
<dbReference type="GO" id="GO:0030245">
    <property type="term" value="P:cellulose catabolic process"/>
    <property type="evidence" value="ECO:0007669"/>
    <property type="project" value="UniProtKB-KW"/>
</dbReference>
<dbReference type="Gene3D" id="2.60.40.290">
    <property type="match status" value="1"/>
</dbReference>
<dbReference type="Gene3D" id="3.20.20.80">
    <property type="entry name" value="Glycosidases"/>
    <property type="match status" value="1"/>
</dbReference>
<dbReference type="InterPro" id="IPR001919">
    <property type="entry name" value="CBD2"/>
</dbReference>
<dbReference type="InterPro" id="IPR008965">
    <property type="entry name" value="CBM2/CBM3_carb-bd_dom_sf"/>
</dbReference>
<dbReference type="InterPro" id="IPR012291">
    <property type="entry name" value="CBM2_carb-bd_dom_sf"/>
</dbReference>
<dbReference type="InterPro" id="IPR001547">
    <property type="entry name" value="Glyco_hydro_5"/>
</dbReference>
<dbReference type="InterPro" id="IPR018087">
    <property type="entry name" value="Glyco_hydro_5_CS"/>
</dbReference>
<dbReference type="InterPro" id="IPR017853">
    <property type="entry name" value="Glycoside_hydrolase_SF"/>
</dbReference>
<dbReference type="PANTHER" id="PTHR35923:SF2">
    <property type="entry name" value="ENDOGLUCANASE"/>
    <property type="match status" value="1"/>
</dbReference>
<dbReference type="PANTHER" id="PTHR35923">
    <property type="entry name" value="MAJOR EXTRACELLULAR ENDOGLUCANASE"/>
    <property type="match status" value="1"/>
</dbReference>
<dbReference type="Pfam" id="PF00553">
    <property type="entry name" value="CBM_2"/>
    <property type="match status" value="1"/>
</dbReference>
<dbReference type="Pfam" id="PF00150">
    <property type="entry name" value="Cellulase"/>
    <property type="match status" value="1"/>
</dbReference>
<dbReference type="SMART" id="SM00637">
    <property type="entry name" value="CBD_II"/>
    <property type="match status" value="1"/>
</dbReference>
<dbReference type="SUPFAM" id="SSF51445">
    <property type="entry name" value="(Trans)glycosidases"/>
    <property type="match status" value="1"/>
</dbReference>
<dbReference type="SUPFAM" id="SSF49384">
    <property type="entry name" value="Carbohydrate-binding domain"/>
    <property type="match status" value="1"/>
</dbReference>
<dbReference type="PROSITE" id="PS51173">
    <property type="entry name" value="CBM2"/>
    <property type="match status" value="1"/>
</dbReference>
<dbReference type="PROSITE" id="PS00659">
    <property type="entry name" value="GLYCOSYL_HYDROL_F5"/>
    <property type="match status" value="1"/>
</dbReference>
<gene>
    <name type="ordered locus">Acel_0614</name>
</gene>